<dbReference type="EC" id="3.13.2.1" evidence="1"/>
<dbReference type="EMBL" id="CP001488">
    <property type="protein sequence ID" value="ACO01805.1"/>
    <property type="molecule type" value="Genomic_DNA"/>
</dbReference>
<dbReference type="RefSeq" id="WP_004684548.1">
    <property type="nucleotide sequence ID" value="NC_012441.1"/>
</dbReference>
<dbReference type="SMR" id="C0RFY3"/>
<dbReference type="GeneID" id="29594914"/>
<dbReference type="KEGG" id="bmi:BMEA_A2159"/>
<dbReference type="HOGENOM" id="CLU_025194_2_0_5"/>
<dbReference type="UniPathway" id="UPA00314">
    <property type="reaction ID" value="UER00076"/>
</dbReference>
<dbReference type="Proteomes" id="UP000001748">
    <property type="component" value="Chromosome I"/>
</dbReference>
<dbReference type="GO" id="GO:0005829">
    <property type="term" value="C:cytosol"/>
    <property type="evidence" value="ECO:0007669"/>
    <property type="project" value="TreeGrafter"/>
</dbReference>
<dbReference type="GO" id="GO:0004013">
    <property type="term" value="F:adenosylhomocysteinase activity"/>
    <property type="evidence" value="ECO:0007669"/>
    <property type="project" value="UniProtKB-UniRule"/>
</dbReference>
<dbReference type="GO" id="GO:0071269">
    <property type="term" value="P:L-homocysteine biosynthetic process"/>
    <property type="evidence" value="ECO:0007669"/>
    <property type="project" value="UniProtKB-UniRule"/>
</dbReference>
<dbReference type="GO" id="GO:0006730">
    <property type="term" value="P:one-carbon metabolic process"/>
    <property type="evidence" value="ECO:0007669"/>
    <property type="project" value="UniProtKB-KW"/>
</dbReference>
<dbReference type="GO" id="GO:0033353">
    <property type="term" value="P:S-adenosylmethionine cycle"/>
    <property type="evidence" value="ECO:0007669"/>
    <property type="project" value="TreeGrafter"/>
</dbReference>
<dbReference type="CDD" id="cd00401">
    <property type="entry name" value="SAHH"/>
    <property type="match status" value="1"/>
</dbReference>
<dbReference type="FunFam" id="3.40.50.720:FF:000004">
    <property type="entry name" value="Adenosylhomocysteinase"/>
    <property type="match status" value="1"/>
</dbReference>
<dbReference type="Gene3D" id="3.40.50.1480">
    <property type="entry name" value="Adenosylhomocysteinase-like"/>
    <property type="match status" value="1"/>
</dbReference>
<dbReference type="Gene3D" id="3.40.50.720">
    <property type="entry name" value="NAD(P)-binding Rossmann-like Domain"/>
    <property type="match status" value="1"/>
</dbReference>
<dbReference type="HAMAP" id="MF_00563">
    <property type="entry name" value="AdoHcyase"/>
    <property type="match status" value="1"/>
</dbReference>
<dbReference type="InterPro" id="IPR042172">
    <property type="entry name" value="Adenosylhomocyst_ase-like_sf"/>
</dbReference>
<dbReference type="InterPro" id="IPR000043">
    <property type="entry name" value="Adenosylhomocysteinase-like"/>
</dbReference>
<dbReference type="InterPro" id="IPR015878">
    <property type="entry name" value="Ado_hCys_hydrolase_NAD-bd"/>
</dbReference>
<dbReference type="InterPro" id="IPR036291">
    <property type="entry name" value="NAD(P)-bd_dom_sf"/>
</dbReference>
<dbReference type="InterPro" id="IPR020082">
    <property type="entry name" value="S-Ado-L-homoCys_hydrolase_CS"/>
</dbReference>
<dbReference type="NCBIfam" id="TIGR00936">
    <property type="entry name" value="ahcY"/>
    <property type="match status" value="1"/>
</dbReference>
<dbReference type="NCBIfam" id="NF004005">
    <property type="entry name" value="PRK05476.2-3"/>
    <property type="match status" value="1"/>
</dbReference>
<dbReference type="PANTHER" id="PTHR23420">
    <property type="entry name" value="ADENOSYLHOMOCYSTEINASE"/>
    <property type="match status" value="1"/>
</dbReference>
<dbReference type="PANTHER" id="PTHR23420:SF0">
    <property type="entry name" value="ADENOSYLHOMOCYSTEINASE"/>
    <property type="match status" value="1"/>
</dbReference>
<dbReference type="Pfam" id="PF05221">
    <property type="entry name" value="AdoHcyase"/>
    <property type="match status" value="1"/>
</dbReference>
<dbReference type="Pfam" id="PF00670">
    <property type="entry name" value="AdoHcyase_NAD"/>
    <property type="match status" value="1"/>
</dbReference>
<dbReference type="PIRSF" id="PIRSF001109">
    <property type="entry name" value="Ad_hcy_hydrolase"/>
    <property type="match status" value="1"/>
</dbReference>
<dbReference type="SMART" id="SM00996">
    <property type="entry name" value="AdoHcyase"/>
    <property type="match status" value="1"/>
</dbReference>
<dbReference type="SMART" id="SM00997">
    <property type="entry name" value="AdoHcyase_NAD"/>
    <property type="match status" value="1"/>
</dbReference>
<dbReference type="SUPFAM" id="SSF52283">
    <property type="entry name" value="Formate/glycerate dehydrogenase catalytic domain-like"/>
    <property type="match status" value="1"/>
</dbReference>
<dbReference type="SUPFAM" id="SSF51735">
    <property type="entry name" value="NAD(P)-binding Rossmann-fold domains"/>
    <property type="match status" value="1"/>
</dbReference>
<dbReference type="PROSITE" id="PS00738">
    <property type="entry name" value="ADOHCYASE_1"/>
    <property type="match status" value="1"/>
</dbReference>
<dbReference type="PROSITE" id="PS00739">
    <property type="entry name" value="ADOHCYASE_2"/>
    <property type="match status" value="1"/>
</dbReference>
<accession>C0RFY3</accession>
<keyword id="KW-0963">Cytoplasm</keyword>
<keyword id="KW-0378">Hydrolase</keyword>
<keyword id="KW-0520">NAD</keyword>
<keyword id="KW-0554">One-carbon metabolism</keyword>
<proteinExistence type="inferred from homology"/>
<gene>
    <name evidence="1" type="primary">ahcY</name>
    <name type="ordered locus">BMEA_A2159</name>
</gene>
<organism>
    <name type="scientific">Brucella melitensis biotype 2 (strain ATCC 23457)</name>
    <dbReference type="NCBI Taxonomy" id="546272"/>
    <lineage>
        <taxon>Bacteria</taxon>
        <taxon>Pseudomonadati</taxon>
        <taxon>Pseudomonadota</taxon>
        <taxon>Alphaproteobacteria</taxon>
        <taxon>Hyphomicrobiales</taxon>
        <taxon>Brucellaceae</taxon>
        <taxon>Brucella/Ochrobactrum group</taxon>
        <taxon>Brucella</taxon>
    </lineage>
</organism>
<protein>
    <recommendedName>
        <fullName evidence="1">Adenosylhomocysteinase</fullName>
        <ecNumber evidence="1">3.13.2.1</ecNumber>
    </recommendedName>
    <alternativeName>
        <fullName evidence="1">S-adenosyl-L-homocysteine hydrolase</fullName>
        <shortName evidence="1">AdoHcyase</shortName>
    </alternativeName>
</protein>
<sequence length="466" mass="50819">MTASQDFVVKDISLADWGRRELDIAETEMPGLMAAREEFGKSQPLKGARISGSLHMTIQTAVLIETLKVLGAEVRWASCNIFSTQDHAAAAIAATGTPVFAVKGETLEEYWTYTDQIFQWPDGEPSNMILDDGGDATMYILIGARAEAGEDVLSNPQSEEEEVLFAQIKKRMAATPGFFTKQRAAIKGVTEETTTGVNRLYQLQKKGLLPFPAINVNDSVTKSKFDNKYGCKESLVDGIRRGTDVMMAGKVAVVCGYGDVGKGSAQSLAGAGARVKVTEVDPICALQAAMDGFEVVTLDDAASTADIVVTTTGNKDVITIDHMRKMKDMCIVGNIGHFDNEIQVAALRNLKWTNVKPQVDLIEFPDGKRLILLSEGRLLNLGNATGHPSFVMSASFTNQVLGQIELFTRTDAYKNEVYVLPKHLDEKVARLHLDKLGAKLTVLSEEQAAYIGVTPQGPFKSEHYRY</sequence>
<name>SAHH_BRUMB</name>
<comment type="function">
    <text evidence="1">May play a key role in the regulation of the intracellular concentration of adenosylhomocysteine.</text>
</comment>
<comment type="catalytic activity">
    <reaction evidence="1">
        <text>S-adenosyl-L-homocysteine + H2O = L-homocysteine + adenosine</text>
        <dbReference type="Rhea" id="RHEA:21708"/>
        <dbReference type="ChEBI" id="CHEBI:15377"/>
        <dbReference type="ChEBI" id="CHEBI:16335"/>
        <dbReference type="ChEBI" id="CHEBI:57856"/>
        <dbReference type="ChEBI" id="CHEBI:58199"/>
        <dbReference type="EC" id="3.13.2.1"/>
    </reaction>
</comment>
<comment type="cofactor">
    <cofactor evidence="1">
        <name>NAD(+)</name>
        <dbReference type="ChEBI" id="CHEBI:57540"/>
    </cofactor>
    <text evidence="1">Binds 1 NAD(+) per subunit.</text>
</comment>
<comment type="pathway">
    <text evidence="1">Amino-acid biosynthesis; L-homocysteine biosynthesis; L-homocysteine from S-adenosyl-L-homocysteine: step 1/1.</text>
</comment>
<comment type="subcellular location">
    <subcellularLocation>
        <location evidence="1">Cytoplasm</location>
    </subcellularLocation>
</comment>
<comment type="similarity">
    <text evidence="1">Belongs to the adenosylhomocysteinase family.</text>
</comment>
<feature type="chain" id="PRO_1000196669" description="Adenosylhomocysteinase">
    <location>
        <begin position="1"/>
        <end position="466"/>
    </location>
</feature>
<feature type="binding site" evidence="1">
    <location>
        <position position="57"/>
    </location>
    <ligand>
        <name>substrate</name>
    </ligand>
</feature>
<feature type="binding site" evidence="1">
    <location>
        <position position="132"/>
    </location>
    <ligand>
        <name>substrate</name>
    </ligand>
</feature>
<feature type="binding site" evidence="1">
    <location>
        <position position="192"/>
    </location>
    <ligand>
        <name>substrate</name>
    </ligand>
</feature>
<feature type="binding site" evidence="1">
    <location>
        <begin position="193"/>
        <end position="195"/>
    </location>
    <ligand>
        <name>NAD(+)</name>
        <dbReference type="ChEBI" id="CHEBI:57540"/>
    </ligand>
</feature>
<feature type="binding site" evidence="1">
    <location>
        <position position="222"/>
    </location>
    <ligand>
        <name>substrate</name>
    </ligand>
</feature>
<feature type="binding site" evidence="1">
    <location>
        <position position="226"/>
    </location>
    <ligand>
        <name>substrate</name>
    </ligand>
</feature>
<feature type="binding site" evidence="1">
    <location>
        <position position="227"/>
    </location>
    <ligand>
        <name>NAD(+)</name>
        <dbReference type="ChEBI" id="CHEBI:57540"/>
    </ligand>
</feature>
<feature type="binding site" evidence="1">
    <location>
        <begin position="256"/>
        <end position="261"/>
    </location>
    <ligand>
        <name>NAD(+)</name>
        <dbReference type="ChEBI" id="CHEBI:57540"/>
    </ligand>
</feature>
<feature type="binding site" evidence="1">
    <location>
        <position position="279"/>
    </location>
    <ligand>
        <name>NAD(+)</name>
        <dbReference type="ChEBI" id="CHEBI:57540"/>
    </ligand>
</feature>
<feature type="binding site" evidence="1">
    <location>
        <position position="314"/>
    </location>
    <ligand>
        <name>NAD(+)</name>
        <dbReference type="ChEBI" id="CHEBI:57540"/>
    </ligand>
</feature>
<feature type="binding site" evidence="1">
    <location>
        <begin position="335"/>
        <end position="337"/>
    </location>
    <ligand>
        <name>NAD(+)</name>
        <dbReference type="ChEBI" id="CHEBI:57540"/>
    </ligand>
</feature>
<feature type="binding site" evidence="1">
    <location>
        <position position="380"/>
    </location>
    <ligand>
        <name>NAD(+)</name>
        <dbReference type="ChEBI" id="CHEBI:57540"/>
    </ligand>
</feature>
<reference key="1">
    <citation type="submission" date="2009-03" db="EMBL/GenBank/DDBJ databases">
        <title>Brucella melitensis ATCC 23457 whole genome shotgun sequencing project.</title>
        <authorList>
            <person name="Setubal J.C."/>
            <person name="Boyle S."/>
            <person name="Crasta O.R."/>
            <person name="Gillespie J.J."/>
            <person name="Kenyon R.W."/>
            <person name="Lu J."/>
            <person name="Mane S."/>
            <person name="Nagrani S."/>
            <person name="Shallom J.M."/>
            <person name="Shallom S."/>
            <person name="Shukla M."/>
            <person name="Snyder E.E."/>
            <person name="Sobral B.W."/>
            <person name="Wattam A.R."/>
            <person name="Will R."/>
            <person name="Williams K."/>
            <person name="Yoo H."/>
            <person name="Munk C."/>
            <person name="Tapia R."/>
            <person name="Han C."/>
            <person name="Detter J.C."/>
            <person name="Bruce D."/>
            <person name="Brettin T.S."/>
        </authorList>
    </citation>
    <scope>NUCLEOTIDE SEQUENCE [LARGE SCALE GENOMIC DNA]</scope>
    <source>
        <strain>ATCC 23457</strain>
    </source>
</reference>
<evidence type="ECO:0000255" key="1">
    <source>
        <dbReference type="HAMAP-Rule" id="MF_00563"/>
    </source>
</evidence>